<organism>
    <name type="scientific">Methylorubrum extorquens (strain PA1)</name>
    <name type="common">Methylobacterium extorquens</name>
    <dbReference type="NCBI Taxonomy" id="419610"/>
    <lineage>
        <taxon>Bacteria</taxon>
        <taxon>Pseudomonadati</taxon>
        <taxon>Pseudomonadota</taxon>
        <taxon>Alphaproteobacteria</taxon>
        <taxon>Hyphomicrobiales</taxon>
        <taxon>Methylobacteriaceae</taxon>
        <taxon>Methylorubrum</taxon>
    </lineage>
</organism>
<keyword id="KW-0285">Flavoprotein</keyword>
<keyword id="KW-0288">FMN</keyword>
<keyword id="KW-0520">NAD</keyword>
<keyword id="KW-0560">Oxidoreductase</keyword>
<name>RUTF1_METEP</name>
<protein>
    <recommendedName>
        <fullName evidence="1">FMN reductase (NADH) RutF 1</fullName>
        <ecNumber evidence="1">1.5.1.42</ecNumber>
    </recommendedName>
    <alternativeName>
        <fullName evidence="1">FMN reductase 1</fullName>
    </alternativeName>
    <alternativeName>
        <fullName evidence="1">NADH-flavin reductase RutF 1</fullName>
    </alternativeName>
    <alternativeName>
        <fullName evidence="1">NADH:flavin oxidoreductase 1</fullName>
    </alternativeName>
</protein>
<comment type="function">
    <text evidence="1">Catalyzes the reduction of FMN to FMNH2 which is used to reduce pyrimidine by RutA via the Rut pathway.</text>
</comment>
<comment type="catalytic activity">
    <reaction evidence="1">
        <text>FMNH2 + NAD(+) = FMN + NADH + 2 H(+)</text>
        <dbReference type="Rhea" id="RHEA:21620"/>
        <dbReference type="ChEBI" id="CHEBI:15378"/>
        <dbReference type="ChEBI" id="CHEBI:57540"/>
        <dbReference type="ChEBI" id="CHEBI:57618"/>
        <dbReference type="ChEBI" id="CHEBI:57945"/>
        <dbReference type="ChEBI" id="CHEBI:58210"/>
        <dbReference type="EC" id="1.5.1.42"/>
    </reaction>
</comment>
<comment type="similarity">
    <text evidence="1">Belongs to the non-flavoprotein flavin reductase family. RutF subfamily.</text>
</comment>
<sequence>MTDSESAAAVSVDAAAYREAMSRLASAVHLITTDGPGGRAGFTASAVCSVSDAPPTLLVCINRASSAYAALTQNGTLCVNTLGEGHETVASLFGGRTPVDERFAAGTWRRLRSGAPALADALVSFDCRIVGRHAVGSHDVLYCAVEAVAASGEADALLYSERRYRTLPRTPRSGSAPAEPARAPRAVGARPAEGPALALRSA</sequence>
<accession>A9W3H7</accession>
<gene>
    <name evidence="1" type="primary">rutF1</name>
    <name type="ordered locus">Mext_1734</name>
</gene>
<proteinExistence type="inferred from homology"/>
<evidence type="ECO:0000255" key="1">
    <source>
        <dbReference type="HAMAP-Rule" id="MF_00833"/>
    </source>
</evidence>
<evidence type="ECO:0000256" key="2">
    <source>
        <dbReference type="SAM" id="MobiDB-lite"/>
    </source>
</evidence>
<reference key="1">
    <citation type="submission" date="2007-12" db="EMBL/GenBank/DDBJ databases">
        <title>Complete sequence of Methylobacterium extorquens PA1.</title>
        <authorList>
            <consortium name="US DOE Joint Genome Institute"/>
            <person name="Copeland A."/>
            <person name="Lucas S."/>
            <person name="Lapidus A."/>
            <person name="Barry K."/>
            <person name="Glavina del Rio T."/>
            <person name="Dalin E."/>
            <person name="Tice H."/>
            <person name="Pitluck S."/>
            <person name="Saunders E."/>
            <person name="Brettin T."/>
            <person name="Bruce D."/>
            <person name="Detter J.C."/>
            <person name="Han C."/>
            <person name="Schmutz J."/>
            <person name="Larimer F."/>
            <person name="Land M."/>
            <person name="Hauser L."/>
            <person name="Kyrpides N."/>
            <person name="Kim E."/>
            <person name="Marx C."/>
            <person name="Richardson P."/>
        </authorList>
    </citation>
    <scope>NUCLEOTIDE SEQUENCE [LARGE SCALE GENOMIC DNA]</scope>
    <source>
        <strain>PA1</strain>
    </source>
</reference>
<dbReference type="EC" id="1.5.1.42" evidence="1"/>
<dbReference type="EMBL" id="CP000908">
    <property type="protein sequence ID" value="ABY30133.1"/>
    <property type="molecule type" value="Genomic_DNA"/>
</dbReference>
<dbReference type="RefSeq" id="WP_012253313.1">
    <property type="nucleotide sequence ID" value="NC_010172.1"/>
</dbReference>
<dbReference type="SMR" id="A9W3H7"/>
<dbReference type="KEGG" id="mex:Mext_1734"/>
<dbReference type="eggNOG" id="COG1853">
    <property type="taxonomic scope" value="Bacteria"/>
</dbReference>
<dbReference type="HOGENOM" id="CLU_059021_2_2_5"/>
<dbReference type="BioCyc" id="MEXT419610:MEXT_RS08800-MONOMER"/>
<dbReference type="GO" id="GO:0010181">
    <property type="term" value="F:FMN binding"/>
    <property type="evidence" value="ECO:0007669"/>
    <property type="project" value="InterPro"/>
</dbReference>
<dbReference type="GO" id="GO:0052874">
    <property type="term" value="F:FMN reductase (NADH) activity"/>
    <property type="evidence" value="ECO:0007669"/>
    <property type="project" value="UniProtKB-EC"/>
</dbReference>
<dbReference type="GO" id="GO:0008752">
    <property type="term" value="F:FMN reductase [NAD(P)H] activity"/>
    <property type="evidence" value="ECO:0007669"/>
    <property type="project" value="InterPro"/>
</dbReference>
<dbReference type="GO" id="GO:0042602">
    <property type="term" value="F:riboflavin reductase (NADPH) activity"/>
    <property type="evidence" value="ECO:0007669"/>
    <property type="project" value="UniProtKB-UniRule"/>
</dbReference>
<dbReference type="GO" id="GO:0019740">
    <property type="term" value="P:nitrogen utilization"/>
    <property type="evidence" value="ECO:0007669"/>
    <property type="project" value="UniProtKB-UniRule"/>
</dbReference>
<dbReference type="GO" id="GO:0006212">
    <property type="term" value="P:uracil catabolic process"/>
    <property type="evidence" value="ECO:0007669"/>
    <property type="project" value="UniProtKB-UniRule"/>
</dbReference>
<dbReference type="Gene3D" id="2.30.110.10">
    <property type="entry name" value="Electron Transport, Fmn-binding Protein, Chain A"/>
    <property type="match status" value="1"/>
</dbReference>
<dbReference type="HAMAP" id="MF_00833">
    <property type="entry name" value="RutF"/>
    <property type="match status" value="1"/>
</dbReference>
<dbReference type="InterPro" id="IPR002563">
    <property type="entry name" value="Flavin_Rdtase-like_dom"/>
</dbReference>
<dbReference type="InterPro" id="IPR050268">
    <property type="entry name" value="NADH-dep_flavin_reductase"/>
</dbReference>
<dbReference type="InterPro" id="IPR019917">
    <property type="entry name" value="RutF"/>
</dbReference>
<dbReference type="InterPro" id="IPR012349">
    <property type="entry name" value="Split_barrel_FMN-bd"/>
</dbReference>
<dbReference type="NCBIfam" id="TIGR03615">
    <property type="entry name" value="RutF"/>
    <property type="match status" value="1"/>
</dbReference>
<dbReference type="PANTHER" id="PTHR30466">
    <property type="entry name" value="FLAVIN REDUCTASE"/>
    <property type="match status" value="1"/>
</dbReference>
<dbReference type="PANTHER" id="PTHR30466:SF1">
    <property type="entry name" value="FMN REDUCTASE (NADH) RUTF"/>
    <property type="match status" value="1"/>
</dbReference>
<dbReference type="Pfam" id="PF01613">
    <property type="entry name" value="Flavin_Reduct"/>
    <property type="match status" value="1"/>
</dbReference>
<dbReference type="SMART" id="SM00903">
    <property type="entry name" value="Flavin_Reduct"/>
    <property type="match status" value="1"/>
</dbReference>
<dbReference type="SUPFAM" id="SSF50475">
    <property type="entry name" value="FMN-binding split barrel"/>
    <property type="match status" value="1"/>
</dbReference>
<feature type="chain" id="PRO_0000403035" description="FMN reductase (NADH) RutF 1">
    <location>
        <begin position="1"/>
        <end position="202"/>
    </location>
</feature>
<feature type="region of interest" description="Disordered" evidence="2">
    <location>
        <begin position="168"/>
        <end position="202"/>
    </location>
</feature>
<feature type="compositionally biased region" description="Low complexity" evidence="2">
    <location>
        <begin position="171"/>
        <end position="196"/>
    </location>
</feature>